<reference key="1">
    <citation type="journal article" date="1992" name="FEBS Lett.">
        <title>Molecular cloning of G protein alpha subunits from the central nervous system of the mollusc Lymnaea stagnalis.</title>
        <authorList>
            <person name="Knol J.C."/>
            <person name="Weidemann W."/>
            <person name="Planta R.J."/>
            <person name="Vreugdenhil E."/>
            <person name="van Heerikhuizen H."/>
        </authorList>
    </citation>
    <scope>NUCLEOTIDE SEQUENCE [MRNA]</scope>
    <source>
        <tissue>CNS</tissue>
    </source>
</reference>
<feature type="initiator methionine" description="Removed" evidence="1">
    <location>
        <position position="1"/>
    </location>
</feature>
<feature type="chain" id="PRO_0000203688" description="Guanine nucleotide-binding protein G(i) subunit alpha">
    <location>
        <begin position="2"/>
        <end position="354"/>
    </location>
</feature>
<feature type="domain" description="G-alpha" evidence="3">
    <location>
        <begin position="32"/>
        <end position="354"/>
    </location>
</feature>
<feature type="region of interest" description="G1 motif" evidence="3">
    <location>
        <begin position="35"/>
        <end position="48"/>
    </location>
</feature>
<feature type="region of interest" description="G2 motif" evidence="3">
    <location>
        <begin position="173"/>
        <end position="181"/>
    </location>
</feature>
<feature type="region of interest" description="G3 motif" evidence="3">
    <location>
        <begin position="196"/>
        <end position="205"/>
    </location>
</feature>
<feature type="region of interest" description="G4 motif" evidence="3">
    <location>
        <begin position="265"/>
        <end position="272"/>
    </location>
</feature>
<feature type="region of interest" description="G5 motif" evidence="3">
    <location>
        <begin position="324"/>
        <end position="329"/>
    </location>
</feature>
<feature type="binding site" evidence="1">
    <location>
        <begin position="40"/>
        <end position="47"/>
    </location>
    <ligand>
        <name>GTP</name>
        <dbReference type="ChEBI" id="CHEBI:37565"/>
    </ligand>
</feature>
<feature type="binding site" evidence="1">
    <location>
        <position position="47"/>
    </location>
    <ligand>
        <name>Mg(2+)</name>
        <dbReference type="ChEBI" id="CHEBI:18420"/>
    </ligand>
</feature>
<feature type="binding site" evidence="1">
    <location>
        <begin position="175"/>
        <end position="181"/>
    </location>
    <ligand>
        <name>GTP</name>
        <dbReference type="ChEBI" id="CHEBI:37565"/>
    </ligand>
</feature>
<feature type="binding site" evidence="1">
    <location>
        <position position="181"/>
    </location>
    <ligand>
        <name>Mg(2+)</name>
        <dbReference type="ChEBI" id="CHEBI:18420"/>
    </ligand>
</feature>
<feature type="binding site" evidence="1">
    <location>
        <begin position="200"/>
        <end position="204"/>
    </location>
    <ligand>
        <name>GTP</name>
        <dbReference type="ChEBI" id="CHEBI:37565"/>
    </ligand>
</feature>
<feature type="binding site" evidence="1">
    <location>
        <begin position="269"/>
        <end position="272"/>
    </location>
    <ligand>
        <name>GTP</name>
        <dbReference type="ChEBI" id="CHEBI:37565"/>
    </ligand>
</feature>
<feature type="binding site" evidence="1">
    <location>
        <position position="326"/>
    </location>
    <ligand>
        <name>GTP</name>
        <dbReference type="ChEBI" id="CHEBI:37565"/>
    </ligand>
</feature>
<feature type="lipid moiety-binding region" description="N-myristoyl glycine" evidence="2">
    <location>
        <position position="2"/>
    </location>
</feature>
<feature type="lipid moiety-binding region" description="S-palmitoyl cysteine" evidence="2">
    <location>
        <position position="3"/>
    </location>
</feature>
<sequence>MGCVTSQEDKAAVERSKQIDKSLRMDGEKAAREVKLLLLGAGESGKSTIVKQMKIIHEKGYSQEECLQYKPVVYSNAIQSMIAIIKAMGQLKIQFGHPDRAEDARQFFALAGHADEGEMSAELSGIMKRLWKDVGVQECFSRSREYQLNDSAEYYLNALDRISAPGYIPTEQDVLRTRVKTTGIVETHFTFKDLHFKMFDVGGQRSERKKWIHCFEGVTAIIFIVAMSEYDLTLAEDQEMNRMMESMKLFDSICNNKWFTETSIILFLNKKDLFEEKIKKSPLTICFPEYTGANTYEEAAAYIQLQFENLNKKKDTKEIYSHFTCATDTNNVQFVFDAVTDVIIKNNLKDCGLF</sequence>
<comment type="function">
    <text>Guanine nucleotide-binding proteins (G proteins) are involved as modulators or transducers in various transmembrane signaling systems. The G(i) proteins are involved in hormonal regulation of adenylate cyclase: they inhibit the cyclase in response to beta-adrenergic stimuli.</text>
</comment>
<comment type="subunit">
    <text>G proteins are composed of 3 units; alpha, beta and gamma. The alpha chain contains the guanine nucleotide binding site.</text>
</comment>
<comment type="similarity">
    <text evidence="4">Belongs to the G-alpha family. G(i/o/t/z) subfamily.</text>
</comment>
<keyword id="KW-0342">GTP-binding</keyword>
<keyword id="KW-0449">Lipoprotein</keyword>
<keyword id="KW-0460">Magnesium</keyword>
<keyword id="KW-0479">Metal-binding</keyword>
<keyword id="KW-0519">Myristate</keyword>
<keyword id="KW-0547">Nucleotide-binding</keyword>
<keyword id="KW-0564">Palmitate</keyword>
<keyword id="KW-0807">Transducer</keyword>
<proteinExistence type="evidence at transcript level"/>
<evidence type="ECO:0000250" key="1"/>
<evidence type="ECO:0000255" key="2"/>
<evidence type="ECO:0000255" key="3">
    <source>
        <dbReference type="PROSITE-ProRule" id="PRU01230"/>
    </source>
</evidence>
<evidence type="ECO:0000305" key="4"/>
<accession>P30682</accession>
<dbReference type="EMBL" id="Z15095">
    <property type="protein sequence ID" value="CAA78807.1"/>
    <property type="molecule type" value="mRNA"/>
</dbReference>
<dbReference type="PIR" id="S27013">
    <property type="entry name" value="S27013"/>
</dbReference>
<dbReference type="SMR" id="P30682"/>
<dbReference type="GO" id="GO:0005737">
    <property type="term" value="C:cytoplasm"/>
    <property type="evidence" value="ECO:0007669"/>
    <property type="project" value="TreeGrafter"/>
</dbReference>
<dbReference type="GO" id="GO:0005834">
    <property type="term" value="C:heterotrimeric G-protein complex"/>
    <property type="evidence" value="ECO:0007669"/>
    <property type="project" value="TreeGrafter"/>
</dbReference>
<dbReference type="GO" id="GO:0001664">
    <property type="term" value="F:G protein-coupled receptor binding"/>
    <property type="evidence" value="ECO:0007669"/>
    <property type="project" value="TreeGrafter"/>
</dbReference>
<dbReference type="GO" id="GO:0031683">
    <property type="term" value="F:G-protein beta/gamma-subunit complex binding"/>
    <property type="evidence" value="ECO:0007669"/>
    <property type="project" value="InterPro"/>
</dbReference>
<dbReference type="GO" id="GO:0005525">
    <property type="term" value="F:GTP binding"/>
    <property type="evidence" value="ECO:0007669"/>
    <property type="project" value="UniProtKB-KW"/>
</dbReference>
<dbReference type="GO" id="GO:0003924">
    <property type="term" value="F:GTPase activity"/>
    <property type="evidence" value="ECO:0007669"/>
    <property type="project" value="InterPro"/>
</dbReference>
<dbReference type="GO" id="GO:0046872">
    <property type="term" value="F:metal ion binding"/>
    <property type="evidence" value="ECO:0007669"/>
    <property type="project" value="UniProtKB-KW"/>
</dbReference>
<dbReference type="GO" id="GO:0007188">
    <property type="term" value="P:adenylate cyclase-modulating G protein-coupled receptor signaling pathway"/>
    <property type="evidence" value="ECO:0007669"/>
    <property type="project" value="InterPro"/>
</dbReference>
<dbReference type="CDD" id="cd00066">
    <property type="entry name" value="G-alpha"/>
    <property type="match status" value="1"/>
</dbReference>
<dbReference type="FunFam" id="1.10.400.10:FF:000001">
    <property type="entry name" value="Guanine nucleotide-binding protein G(I) subunit alpha"/>
    <property type="match status" value="1"/>
</dbReference>
<dbReference type="FunFam" id="3.40.50.300:FF:002487">
    <property type="entry name" value="Guanine nucleotide-binding protein G(i) subunit alpha-1"/>
    <property type="match status" value="1"/>
</dbReference>
<dbReference type="FunFam" id="3.40.50.300:FF:003559">
    <property type="entry name" value="Guanine nucleotide-binding protein G(i) subunit alpha-1"/>
    <property type="match status" value="1"/>
</dbReference>
<dbReference type="Gene3D" id="1.10.400.10">
    <property type="entry name" value="GI Alpha 1, domain 2-like"/>
    <property type="match status" value="1"/>
</dbReference>
<dbReference type="Gene3D" id="3.40.50.300">
    <property type="entry name" value="P-loop containing nucleotide triphosphate hydrolases"/>
    <property type="match status" value="1"/>
</dbReference>
<dbReference type="InterPro" id="IPR001408">
    <property type="entry name" value="Gprotein_alpha_I"/>
</dbReference>
<dbReference type="InterPro" id="IPR001019">
    <property type="entry name" value="Gprotein_alpha_su"/>
</dbReference>
<dbReference type="InterPro" id="IPR011025">
    <property type="entry name" value="GproteinA_insert"/>
</dbReference>
<dbReference type="InterPro" id="IPR027417">
    <property type="entry name" value="P-loop_NTPase"/>
</dbReference>
<dbReference type="PANTHER" id="PTHR10218:SF227">
    <property type="entry name" value="G PROTEIN ALPHA I SUBUNIT"/>
    <property type="match status" value="1"/>
</dbReference>
<dbReference type="PANTHER" id="PTHR10218">
    <property type="entry name" value="GTP-BINDING PROTEIN ALPHA SUBUNIT"/>
    <property type="match status" value="1"/>
</dbReference>
<dbReference type="Pfam" id="PF00503">
    <property type="entry name" value="G-alpha"/>
    <property type="match status" value="1"/>
</dbReference>
<dbReference type="PRINTS" id="PR00318">
    <property type="entry name" value="GPROTEINA"/>
</dbReference>
<dbReference type="PRINTS" id="PR00441">
    <property type="entry name" value="GPROTEINAI"/>
</dbReference>
<dbReference type="SMART" id="SM00275">
    <property type="entry name" value="G_alpha"/>
    <property type="match status" value="1"/>
</dbReference>
<dbReference type="SUPFAM" id="SSF52540">
    <property type="entry name" value="P-loop containing nucleoside triphosphate hydrolases"/>
    <property type="match status" value="1"/>
</dbReference>
<dbReference type="SUPFAM" id="SSF47895">
    <property type="entry name" value="Transducin (alpha subunit), insertion domain"/>
    <property type="match status" value="1"/>
</dbReference>
<dbReference type="PROSITE" id="PS51882">
    <property type="entry name" value="G_ALPHA"/>
    <property type="match status" value="1"/>
</dbReference>
<protein>
    <recommendedName>
        <fullName>Guanine nucleotide-binding protein G(i) subunit alpha</fullName>
    </recommendedName>
    <alternativeName>
        <fullName>Adenylate cyclase-inhibiting G alpha protein</fullName>
    </alternativeName>
</protein>
<name>GNAI_LYMST</name>
<organism>
    <name type="scientific">Lymnaea stagnalis</name>
    <name type="common">Great pond snail</name>
    <name type="synonym">Helix stagnalis</name>
    <dbReference type="NCBI Taxonomy" id="6523"/>
    <lineage>
        <taxon>Eukaryota</taxon>
        <taxon>Metazoa</taxon>
        <taxon>Spiralia</taxon>
        <taxon>Lophotrochozoa</taxon>
        <taxon>Mollusca</taxon>
        <taxon>Gastropoda</taxon>
        <taxon>Heterobranchia</taxon>
        <taxon>Euthyneura</taxon>
        <taxon>Panpulmonata</taxon>
        <taxon>Hygrophila</taxon>
        <taxon>Lymnaeoidea</taxon>
        <taxon>Lymnaeidae</taxon>
        <taxon>Lymnaea</taxon>
    </lineage>
</organism>